<keyword id="KW-0325">Glycoprotein</keyword>
<keyword id="KW-0472">Membrane</keyword>
<keyword id="KW-1185">Reference proteome</keyword>
<keyword id="KW-0732">Signal</keyword>
<keyword id="KW-0812">Transmembrane</keyword>
<keyword id="KW-1133">Transmembrane helix</keyword>
<sequence>MLTLAKIALISSLFISLPFARPQKQNPRRNVTQHTIEDVKIMRNNSIHLERSINVTSENGSDISNLMVTTPSPLNLSTTFRTTNSTRTWLMTSSSESSRPSSTYSVPPLVQGFVSKLPLNSSTADANPLQVSEHSNSTNSPSPENFTWSLDNDTMNSPEDISTTVRPFPPPPKTTPVTPFTAEPTEWLPTNNDNFAGFTPYQEKTTLQPTLKFTNNSKLFPNTSDTPKENKNTGIVFGAILGAILGASLLSLVGYLLCGQRKTDSFSHRRLYDDRNEPVLRLDNAPEPYDVNFGNSSYYNPAVSDSSMPEGGESLQDGIPMDAIPPLRPSI</sequence>
<dbReference type="EMBL" id="AY198336">
    <property type="protein sequence ID" value="AAO45176.1"/>
    <property type="status" value="ALT_FRAME"/>
    <property type="molecule type" value="mRNA"/>
</dbReference>
<dbReference type="EMBL" id="AY198337">
    <property type="protein sequence ID" value="AAO45177.1"/>
    <property type="status" value="ALT_FRAME"/>
    <property type="molecule type" value="mRNA"/>
</dbReference>
<dbReference type="EMBL" id="AK028832">
    <property type="protein sequence ID" value="BAC26143.1"/>
    <property type="molecule type" value="mRNA"/>
</dbReference>
<dbReference type="EMBL" id="AK052840">
    <property type="protein sequence ID" value="BAC35171.1"/>
    <property type="molecule type" value="mRNA"/>
</dbReference>
<dbReference type="EMBL" id="AK142590">
    <property type="protein sequence ID" value="BAE25118.1"/>
    <property type="molecule type" value="mRNA"/>
</dbReference>
<dbReference type="EMBL" id="BC055469">
    <property type="protein sequence ID" value="AAH55469.1"/>
    <property type="molecule type" value="mRNA"/>
</dbReference>
<dbReference type="CCDS" id="CCDS16513.1"/>
<dbReference type="RefSeq" id="NP_001277715.1">
    <property type="nucleotide sequence ID" value="NM_001290786.1"/>
</dbReference>
<dbReference type="RefSeq" id="NP_766567.1">
    <property type="nucleotide sequence ID" value="NM_172979.3"/>
</dbReference>
<dbReference type="FunCoup" id="Q8C6Z1">
    <property type="interactions" value="23"/>
</dbReference>
<dbReference type="STRING" id="10090.ENSMUSP00000106645"/>
<dbReference type="GlyCosmos" id="Q8C6Z1">
    <property type="glycosylation" value="12 sites, No reported glycans"/>
</dbReference>
<dbReference type="GlyGen" id="Q8C6Z1">
    <property type="glycosylation" value="12 sites"/>
</dbReference>
<dbReference type="iPTMnet" id="Q8C6Z1"/>
<dbReference type="PhosphoSitePlus" id="Q8C6Z1"/>
<dbReference type="PaxDb" id="10090-ENSMUSP00000106645"/>
<dbReference type="ProteomicsDB" id="287520"/>
<dbReference type="Antibodypedia" id="12684">
    <property type="antibodies" value="140 antibodies from 28 providers"/>
</dbReference>
<dbReference type="DNASU" id="269328"/>
<dbReference type="Ensembl" id="ENSMUST00000090332.5">
    <property type="protein sequence ID" value="ENSMUSP00000087805.5"/>
    <property type="gene ID" value="ENSMUSG00000050808.14"/>
</dbReference>
<dbReference type="Ensembl" id="ENSMUST00000111016.9">
    <property type="protein sequence ID" value="ENSMUSP00000106645.3"/>
    <property type="gene ID" value="ENSMUSG00000050808.14"/>
</dbReference>
<dbReference type="GeneID" id="269328"/>
<dbReference type="KEGG" id="mmu:269328"/>
<dbReference type="UCSC" id="uc008lmz.2">
    <property type="organism name" value="mouse"/>
</dbReference>
<dbReference type="AGR" id="MGI:2442110"/>
<dbReference type="CTD" id="143662"/>
<dbReference type="MGI" id="MGI:2442110">
    <property type="gene designation" value="Muc15"/>
</dbReference>
<dbReference type="VEuPathDB" id="HostDB:ENSMUSG00000050808"/>
<dbReference type="eggNOG" id="ENOG502S7P0">
    <property type="taxonomic scope" value="Eukaryota"/>
</dbReference>
<dbReference type="GeneTree" id="ENSGT00390000001698"/>
<dbReference type="HOGENOM" id="CLU_054055_0_0_1"/>
<dbReference type="InParanoid" id="Q8C6Z1"/>
<dbReference type="OMA" id="PDEWLTT"/>
<dbReference type="OrthoDB" id="9950822at2759"/>
<dbReference type="PhylomeDB" id="Q8C6Z1"/>
<dbReference type="TreeFam" id="TF338656"/>
<dbReference type="Reactome" id="R-MMU-913709">
    <property type="pathway name" value="O-linked glycosylation of mucins"/>
</dbReference>
<dbReference type="Reactome" id="R-MMU-977068">
    <property type="pathway name" value="Termination of O-glycan biosynthesis"/>
</dbReference>
<dbReference type="BioGRID-ORCS" id="269328">
    <property type="hits" value="1 hit in 76 CRISPR screens"/>
</dbReference>
<dbReference type="PRO" id="PR:Q8C6Z1"/>
<dbReference type="Proteomes" id="UP000000589">
    <property type="component" value="Chromosome 2"/>
</dbReference>
<dbReference type="RNAct" id="Q8C6Z1">
    <property type="molecule type" value="protein"/>
</dbReference>
<dbReference type="Bgee" id="ENSMUSG00000050808">
    <property type="expression patterns" value="Expressed in epithelium of cochlear duct and 62 other cell types or tissues"/>
</dbReference>
<dbReference type="ExpressionAtlas" id="Q8C6Z1">
    <property type="expression patterns" value="baseline and differential"/>
</dbReference>
<dbReference type="GO" id="GO:0016020">
    <property type="term" value="C:membrane"/>
    <property type="evidence" value="ECO:0007669"/>
    <property type="project" value="UniProtKB-SubCell"/>
</dbReference>
<dbReference type="InterPro" id="IPR031371">
    <property type="entry name" value="Mucin-15"/>
</dbReference>
<dbReference type="PANTHER" id="PTHR45427">
    <property type="entry name" value="MUCIN-15"/>
    <property type="match status" value="1"/>
</dbReference>
<dbReference type="PANTHER" id="PTHR45427:SF1">
    <property type="entry name" value="MUCIN-15"/>
    <property type="match status" value="1"/>
</dbReference>
<dbReference type="Pfam" id="PF15672">
    <property type="entry name" value="Mucin15"/>
    <property type="match status" value="1"/>
</dbReference>
<organism>
    <name type="scientific">Mus musculus</name>
    <name type="common">Mouse</name>
    <dbReference type="NCBI Taxonomy" id="10090"/>
    <lineage>
        <taxon>Eukaryota</taxon>
        <taxon>Metazoa</taxon>
        <taxon>Chordata</taxon>
        <taxon>Craniata</taxon>
        <taxon>Vertebrata</taxon>
        <taxon>Euteleostomi</taxon>
        <taxon>Mammalia</taxon>
        <taxon>Eutheria</taxon>
        <taxon>Euarchontoglires</taxon>
        <taxon>Glires</taxon>
        <taxon>Rodentia</taxon>
        <taxon>Myomorpha</taxon>
        <taxon>Muroidea</taxon>
        <taxon>Muridae</taxon>
        <taxon>Murinae</taxon>
        <taxon>Mus</taxon>
        <taxon>Mus</taxon>
    </lineage>
</organism>
<comment type="subcellular location">
    <subcellularLocation>
        <location evidence="4">Membrane</location>
        <topology evidence="4">Single-pass type I membrane protein</topology>
    </subcellularLocation>
</comment>
<comment type="PTM">
    <text evidence="1">Highly glycosylated (N- and O-linked carbohydrates).</text>
</comment>
<comment type="sequence caution" evidence="4">
    <conflict type="frameshift">
        <sequence resource="EMBL-CDS" id="AAO45176"/>
    </conflict>
</comment>
<comment type="sequence caution" evidence="4">
    <conflict type="frameshift">
        <sequence resource="EMBL-CDS" id="AAO45177"/>
    </conflict>
</comment>
<accession>Q8C6Z1</accession>
<accession>Q3UQC4</accession>
<accession>Q6XYQ9</accession>
<accession>Q7TMH6</accession>
<accession>Q8CE82</accession>
<name>MUC15_MOUSE</name>
<evidence type="ECO:0000250" key="1"/>
<evidence type="ECO:0000255" key="2"/>
<evidence type="ECO:0000256" key="3">
    <source>
        <dbReference type="SAM" id="MobiDB-lite"/>
    </source>
</evidence>
<evidence type="ECO:0000305" key="4"/>
<reference key="1">
    <citation type="submission" date="2002-12" db="EMBL/GenBank/DDBJ databases">
        <title>Cloning and characterization of two mouse MUC15 splice forms.</title>
        <authorList>
            <person name="Bierie B."/>
            <person name="Cui K."/>
            <person name="Miyoshi K."/>
            <person name="Tang W."/>
            <person name="Hennighausen L."/>
        </authorList>
    </citation>
    <scope>NUCLEOTIDE SEQUENCE [MRNA]</scope>
    <source>
        <tissue>Lactating mammary gland</tissue>
    </source>
</reference>
<reference key="2">
    <citation type="journal article" date="2005" name="Science">
        <title>The transcriptional landscape of the mammalian genome.</title>
        <authorList>
            <person name="Carninci P."/>
            <person name="Kasukawa T."/>
            <person name="Katayama S."/>
            <person name="Gough J."/>
            <person name="Frith M.C."/>
            <person name="Maeda N."/>
            <person name="Oyama R."/>
            <person name="Ravasi T."/>
            <person name="Lenhard B."/>
            <person name="Wells C."/>
            <person name="Kodzius R."/>
            <person name="Shimokawa K."/>
            <person name="Bajic V.B."/>
            <person name="Brenner S.E."/>
            <person name="Batalov S."/>
            <person name="Forrest A.R."/>
            <person name="Zavolan M."/>
            <person name="Davis M.J."/>
            <person name="Wilming L.G."/>
            <person name="Aidinis V."/>
            <person name="Allen J.E."/>
            <person name="Ambesi-Impiombato A."/>
            <person name="Apweiler R."/>
            <person name="Aturaliya R.N."/>
            <person name="Bailey T.L."/>
            <person name="Bansal M."/>
            <person name="Baxter L."/>
            <person name="Beisel K.W."/>
            <person name="Bersano T."/>
            <person name="Bono H."/>
            <person name="Chalk A.M."/>
            <person name="Chiu K.P."/>
            <person name="Choudhary V."/>
            <person name="Christoffels A."/>
            <person name="Clutterbuck D.R."/>
            <person name="Crowe M.L."/>
            <person name="Dalla E."/>
            <person name="Dalrymple B.P."/>
            <person name="de Bono B."/>
            <person name="Della Gatta G."/>
            <person name="di Bernardo D."/>
            <person name="Down T."/>
            <person name="Engstrom P."/>
            <person name="Fagiolini M."/>
            <person name="Faulkner G."/>
            <person name="Fletcher C.F."/>
            <person name="Fukushima T."/>
            <person name="Furuno M."/>
            <person name="Futaki S."/>
            <person name="Gariboldi M."/>
            <person name="Georgii-Hemming P."/>
            <person name="Gingeras T.R."/>
            <person name="Gojobori T."/>
            <person name="Green R.E."/>
            <person name="Gustincich S."/>
            <person name="Harbers M."/>
            <person name="Hayashi Y."/>
            <person name="Hensch T.K."/>
            <person name="Hirokawa N."/>
            <person name="Hill D."/>
            <person name="Huminiecki L."/>
            <person name="Iacono M."/>
            <person name="Ikeo K."/>
            <person name="Iwama A."/>
            <person name="Ishikawa T."/>
            <person name="Jakt M."/>
            <person name="Kanapin A."/>
            <person name="Katoh M."/>
            <person name="Kawasawa Y."/>
            <person name="Kelso J."/>
            <person name="Kitamura H."/>
            <person name="Kitano H."/>
            <person name="Kollias G."/>
            <person name="Krishnan S.P."/>
            <person name="Kruger A."/>
            <person name="Kummerfeld S.K."/>
            <person name="Kurochkin I.V."/>
            <person name="Lareau L.F."/>
            <person name="Lazarevic D."/>
            <person name="Lipovich L."/>
            <person name="Liu J."/>
            <person name="Liuni S."/>
            <person name="McWilliam S."/>
            <person name="Madan Babu M."/>
            <person name="Madera M."/>
            <person name="Marchionni L."/>
            <person name="Matsuda H."/>
            <person name="Matsuzawa S."/>
            <person name="Miki H."/>
            <person name="Mignone F."/>
            <person name="Miyake S."/>
            <person name="Morris K."/>
            <person name="Mottagui-Tabar S."/>
            <person name="Mulder N."/>
            <person name="Nakano N."/>
            <person name="Nakauchi H."/>
            <person name="Ng P."/>
            <person name="Nilsson R."/>
            <person name="Nishiguchi S."/>
            <person name="Nishikawa S."/>
            <person name="Nori F."/>
            <person name="Ohara O."/>
            <person name="Okazaki Y."/>
            <person name="Orlando V."/>
            <person name="Pang K.C."/>
            <person name="Pavan W.J."/>
            <person name="Pavesi G."/>
            <person name="Pesole G."/>
            <person name="Petrovsky N."/>
            <person name="Piazza S."/>
            <person name="Reed J."/>
            <person name="Reid J.F."/>
            <person name="Ring B.Z."/>
            <person name="Ringwald M."/>
            <person name="Rost B."/>
            <person name="Ruan Y."/>
            <person name="Salzberg S.L."/>
            <person name="Sandelin A."/>
            <person name="Schneider C."/>
            <person name="Schoenbach C."/>
            <person name="Sekiguchi K."/>
            <person name="Semple C.A."/>
            <person name="Seno S."/>
            <person name="Sessa L."/>
            <person name="Sheng Y."/>
            <person name="Shibata Y."/>
            <person name="Shimada H."/>
            <person name="Shimada K."/>
            <person name="Silva D."/>
            <person name="Sinclair B."/>
            <person name="Sperling S."/>
            <person name="Stupka E."/>
            <person name="Sugiura K."/>
            <person name="Sultana R."/>
            <person name="Takenaka Y."/>
            <person name="Taki K."/>
            <person name="Tammoja K."/>
            <person name="Tan S.L."/>
            <person name="Tang S."/>
            <person name="Taylor M.S."/>
            <person name="Tegner J."/>
            <person name="Teichmann S.A."/>
            <person name="Ueda H.R."/>
            <person name="van Nimwegen E."/>
            <person name="Verardo R."/>
            <person name="Wei C.L."/>
            <person name="Yagi K."/>
            <person name="Yamanishi H."/>
            <person name="Zabarovsky E."/>
            <person name="Zhu S."/>
            <person name="Zimmer A."/>
            <person name="Hide W."/>
            <person name="Bult C."/>
            <person name="Grimmond S.M."/>
            <person name="Teasdale R.D."/>
            <person name="Liu E.T."/>
            <person name="Brusic V."/>
            <person name="Quackenbush J."/>
            <person name="Wahlestedt C."/>
            <person name="Mattick J.S."/>
            <person name="Hume D.A."/>
            <person name="Kai C."/>
            <person name="Sasaki D."/>
            <person name="Tomaru Y."/>
            <person name="Fukuda S."/>
            <person name="Kanamori-Katayama M."/>
            <person name="Suzuki M."/>
            <person name="Aoki J."/>
            <person name="Arakawa T."/>
            <person name="Iida J."/>
            <person name="Imamura K."/>
            <person name="Itoh M."/>
            <person name="Kato T."/>
            <person name="Kawaji H."/>
            <person name="Kawagashira N."/>
            <person name="Kawashima T."/>
            <person name="Kojima M."/>
            <person name="Kondo S."/>
            <person name="Konno H."/>
            <person name="Nakano K."/>
            <person name="Ninomiya N."/>
            <person name="Nishio T."/>
            <person name="Okada M."/>
            <person name="Plessy C."/>
            <person name="Shibata K."/>
            <person name="Shiraki T."/>
            <person name="Suzuki S."/>
            <person name="Tagami M."/>
            <person name="Waki K."/>
            <person name="Watahiki A."/>
            <person name="Okamura-Oho Y."/>
            <person name="Suzuki H."/>
            <person name="Kawai J."/>
            <person name="Hayashizaki Y."/>
        </authorList>
    </citation>
    <scope>NUCLEOTIDE SEQUENCE [LARGE SCALE MRNA]</scope>
    <source>
        <strain>C57BL/6J</strain>
        <tissue>Mammary gland</tissue>
        <tissue>Skin</tissue>
    </source>
</reference>
<reference key="3">
    <citation type="journal article" date="2004" name="Genome Res.">
        <title>The status, quality, and expansion of the NIH full-length cDNA project: the Mammalian Gene Collection (MGC).</title>
        <authorList>
            <consortium name="The MGC Project Team"/>
        </authorList>
    </citation>
    <scope>NUCLEOTIDE SEQUENCE [LARGE SCALE MRNA] OF 195-331</scope>
    <source>
        <strain>C57BL/6J</strain>
        <tissue>Mammary tumor</tissue>
    </source>
</reference>
<proteinExistence type="evidence at transcript level"/>
<protein>
    <recommendedName>
        <fullName>Mucin-15</fullName>
        <shortName>MUC-15</shortName>
    </recommendedName>
</protein>
<feature type="signal peptide" evidence="2">
    <location>
        <begin position="1"/>
        <end position="22"/>
    </location>
</feature>
<feature type="chain" id="PRO_0000019289" description="Mucin-15">
    <location>
        <begin position="23"/>
        <end position="331"/>
    </location>
</feature>
<feature type="topological domain" description="Extracellular" evidence="2">
    <location>
        <begin position="23"/>
        <end position="233"/>
    </location>
</feature>
<feature type="transmembrane region" description="Helical" evidence="2">
    <location>
        <begin position="234"/>
        <end position="254"/>
    </location>
</feature>
<feature type="topological domain" description="Cytoplasmic" evidence="2">
    <location>
        <begin position="255"/>
        <end position="331"/>
    </location>
</feature>
<feature type="region of interest" description="Disordered" evidence="3">
    <location>
        <begin position="124"/>
        <end position="186"/>
    </location>
</feature>
<feature type="region of interest" description="Disordered" evidence="3">
    <location>
        <begin position="302"/>
        <end position="331"/>
    </location>
</feature>
<feature type="compositionally biased region" description="Polar residues" evidence="3">
    <location>
        <begin position="124"/>
        <end position="162"/>
    </location>
</feature>
<feature type="glycosylation site" description="N-linked (GlcNAc...) asparagine" evidence="2">
    <location>
        <position position="30"/>
    </location>
</feature>
<feature type="glycosylation site" description="N-linked (GlcNAc...) asparagine" evidence="2">
    <location>
        <position position="44"/>
    </location>
</feature>
<feature type="glycosylation site" description="N-linked (GlcNAc...) asparagine" evidence="2">
    <location>
        <position position="54"/>
    </location>
</feature>
<feature type="glycosylation site" description="N-linked (GlcNAc...) asparagine" evidence="2">
    <location>
        <position position="59"/>
    </location>
</feature>
<feature type="glycosylation site" description="N-linked (GlcNAc...) asparagine" evidence="2">
    <location>
        <position position="75"/>
    </location>
</feature>
<feature type="glycosylation site" description="N-linked (GlcNAc...) asparagine" evidence="2">
    <location>
        <position position="84"/>
    </location>
</feature>
<feature type="glycosylation site" description="N-linked (GlcNAc...) asparagine" evidence="2">
    <location>
        <position position="120"/>
    </location>
</feature>
<feature type="glycosylation site" description="N-linked (GlcNAc...) asparagine" evidence="2">
    <location>
        <position position="136"/>
    </location>
</feature>
<feature type="glycosylation site" description="N-linked (GlcNAc...) asparagine" evidence="2">
    <location>
        <position position="145"/>
    </location>
</feature>
<feature type="glycosylation site" description="N-linked (GlcNAc...) asparagine" evidence="2">
    <location>
        <position position="152"/>
    </location>
</feature>
<feature type="glycosylation site" description="N-linked (GlcNAc...) asparagine" evidence="2">
    <location>
        <position position="215"/>
    </location>
</feature>
<feature type="glycosylation site" description="N-linked (GlcNAc...) asparagine" evidence="2">
    <location>
        <position position="222"/>
    </location>
</feature>
<feature type="sequence conflict" description="In Ref. 3; AAH55469." evidence="4" ref="3">
    <original>M</original>
    <variation>L</variation>
    <location>
        <position position="308"/>
    </location>
</feature>
<feature type="sequence conflict" description="In Ref. 3; AAH55469." evidence="4" ref="3">
    <original>L</original>
    <variation>F</variation>
    <location>
        <position position="327"/>
    </location>
</feature>
<gene>
    <name type="primary">Muc15</name>
</gene>